<keyword id="KW-0963">Cytoplasm</keyword>
<keyword id="KW-0378">Hydrolase</keyword>
<keyword id="KW-1185">Reference proteome</keyword>
<keyword id="KW-0694">RNA-binding</keyword>
<keyword id="KW-0820">tRNA-binding</keyword>
<dbReference type="EC" id="3.1.1.96" evidence="1"/>
<dbReference type="EMBL" id="CP000031">
    <property type="protein sequence ID" value="AAV96230.1"/>
    <property type="molecule type" value="Genomic_DNA"/>
</dbReference>
<dbReference type="RefSeq" id="WP_011048688.1">
    <property type="nucleotide sequence ID" value="NC_003911.12"/>
</dbReference>
<dbReference type="SMR" id="Q5LP58"/>
<dbReference type="STRING" id="246200.SPO2992"/>
<dbReference type="PaxDb" id="246200-SPO2992"/>
<dbReference type="KEGG" id="sil:SPO2992"/>
<dbReference type="eggNOG" id="COG1490">
    <property type="taxonomic scope" value="Bacteria"/>
</dbReference>
<dbReference type="HOGENOM" id="CLU_076901_1_1_5"/>
<dbReference type="OrthoDB" id="9801395at2"/>
<dbReference type="Proteomes" id="UP000001023">
    <property type="component" value="Chromosome"/>
</dbReference>
<dbReference type="GO" id="GO:0005737">
    <property type="term" value="C:cytoplasm"/>
    <property type="evidence" value="ECO:0007669"/>
    <property type="project" value="UniProtKB-SubCell"/>
</dbReference>
<dbReference type="GO" id="GO:0051500">
    <property type="term" value="F:D-tyrosyl-tRNA(Tyr) deacylase activity"/>
    <property type="evidence" value="ECO:0007669"/>
    <property type="project" value="TreeGrafter"/>
</dbReference>
<dbReference type="GO" id="GO:0106026">
    <property type="term" value="F:Gly-tRNA(Ala) deacylase activity"/>
    <property type="evidence" value="ECO:0007669"/>
    <property type="project" value="UniProtKB-UniRule"/>
</dbReference>
<dbReference type="GO" id="GO:0043908">
    <property type="term" value="F:Ser(Gly)-tRNA(Ala) hydrolase activity"/>
    <property type="evidence" value="ECO:0007669"/>
    <property type="project" value="UniProtKB-UniRule"/>
</dbReference>
<dbReference type="GO" id="GO:0000049">
    <property type="term" value="F:tRNA binding"/>
    <property type="evidence" value="ECO:0007669"/>
    <property type="project" value="UniProtKB-UniRule"/>
</dbReference>
<dbReference type="GO" id="GO:0019478">
    <property type="term" value="P:D-amino acid catabolic process"/>
    <property type="evidence" value="ECO:0007669"/>
    <property type="project" value="UniProtKB-UniRule"/>
</dbReference>
<dbReference type="CDD" id="cd00563">
    <property type="entry name" value="Dtyr_deacylase"/>
    <property type="match status" value="1"/>
</dbReference>
<dbReference type="FunFam" id="3.50.80.10:FF:000001">
    <property type="entry name" value="D-aminoacyl-tRNA deacylase"/>
    <property type="match status" value="1"/>
</dbReference>
<dbReference type="Gene3D" id="3.50.80.10">
    <property type="entry name" value="D-tyrosyl-tRNA(Tyr) deacylase"/>
    <property type="match status" value="1"/>
</dbReference>
<dbReference type="HAMAP" id="MF_00518">
    <property type="entry name" value="Deacylase_Dtd"/>
    <property type="match status" value="1"/>
</dbReference>
<dbReference type="InterPro" id="IPR003732">
    <property type="entry name" value="Daa-tRNA_deacyls_DTD"/>
</dbReference>
<dbReference type="InterPro" id="IPR023509">
    <property type="entry name" value="DTD-like_sf"/>
</dbReference>
<dbReference type="NCBIfam" id="TIGR00256">
    <property type="entry name" value="D-aminoacyl-tRNA deacylase"/>
    <property type="match status" value="1"/>
</dbReference>
<dbReference type="PANTHER" id="PTHR10472:SF5">
    <property type="entry name" value="D-AMINOACYL-TRNA DEACYLASE 1"/>
    <property type="match status" value="1"/>
</dbReference>
<dbReference type="PANTHER" id="PTHR10472">
    <property type="entry name" value="D-TYROSYL-TRNA TYR DEACYLASE"/>
    <property type="match status" value="1"/>
</dbReference>
<dbReference type="Pfam" id="PF02580">
    <property type="entry name" value="Tyr_Deacylase"/>
    <property type="match status" value="1"/>
</dbReference>
<dbReference type="SUPFAM" id="SSF69500">
    <property type="entry name" value="DTD-like"/>
    <property type="match status" value="1"/>
</dbReference>
<comment type="function">
    <text evidence="1">An aminoacyl-tRNA editing enzyme that deacylates mischarged D-aminoacyl-tRNAs. Also deacylates mischarged glycyl-tRNA(Ala), protecting cells against glycine mischarging by AlaRS. Acts via tRNA-based rather than protein-based catalysis; rejects L-amino acids rather than detecting D-amino acids in the active site. By recycling D-aminoacyl-tRNA to D-amino acids and free tRNA molecules, this enzyme counteracts the toxicity associated with the formation of D-aminoacyl-tRNA entities in vivo and helps enforce protein L-homochirality.</text>
</comment>
<comment type="catalytic activity">
    <reaction evidence="1">
        <text>glycyl-tRNA(Ala) + H2O = tRNA(Ala) + glycine + H(+)</text>
        <dbReference type="Rhea" id="RHEA:53744"/>
        <dbReference type="Rhea" id="RHEA-COMP:9657"/>
        <dbReference type="Rhea" id="RHEA-COMP:13640"/>
        <dbReference type="ChEBI" id="CHEBI:15377"/>
        <dbReference type="ChEBI" id="CHEBI:15378"/>
        <dbReference type="ChEBI" id="CHEBI:57305"/>
        <dbReference type="ChEBI" id="CHEBI:78442"/>
        <dbReference type="ChEBI" id="CHEBI:78522"/>
        <dbReference type="EC" id="3.1.1.96"/>
    </reaction>
</comment>
<comment type="catalytic activity">
    <reaction evidence="1">
        <text>a D-aminoacyl-tRNA + H2O = a tRNA + a D-alpha-amino acid + H(+)</text>
        <dbReference type="Rhea" id="RHEA:13953"/>
        <dbReference type="Rhea" id="RHEA-COMP:10123"/>
        <dbReference type="Rhea" id="RHEA-COMP:10124"/>
        <dbReference type="ChEBI" id="CHEBI:15377"/>
        <dbReference type="ChEBI" id="CHEBI:15378"/>
        <dbReference type="ChEBI" id="CHEBI:59871"/>
        <dbReference type="ChEBI" id="CHEBI:78442"/>
        <dbReference type="ChEBI" id="CHEBI:79333"/>
        <dbReference type="EC" id="3.1.1.96"/>
    </reaction>
</comment>
<comment type="subunit">
    <text evidence="1">Homodimer.</text>
</comment>
<comment type="subcellular location">
    <subcellularLocation>
        <location evidence="1">Cytoplasm</location>
    </subcellularLocation>
</comment>
<comment type="domain">
    <text evidence="1">A Gly-cisPro motif from one monomer fits into the active site of the other monomer to allow specific chiral rejection of L-amino acids.</text>
</comment>
<comment type="similarity">
    <text evidence="1">Belongs to the DTD family.</text>
</comment>
<proteinExistence type="inferred from homology"/>
<gene>
    <name evidence="1" type="primary">dtd</name>
    <name type="ordered locus">SPO2992</name>
</gene>
<protein>
    <recommendedName>
        <fullName evidence="1">D-aminoacyl-tRNA deacylase</fullName>
        <shortName evidence="1">DTD</shortName>
        <ecNumber evidence="1">3.1.1.96</ecNumber>
    </recommendedName>
    <alternativeName>
        <fullName evidence="1">Gly-tRNA(Ala) deacylase</fullName>
    </alternativeName>
</protein>
<sequence length="145" mass="15172">MRALIQRVSHASVTVDGVVVGQTGPGLLVLVCAMAGDGEAQADQLAAKIARLRIFKDEAGKMNRSVLDIGGAALVVSQFTLAADTRSGNRPGFSSAAPPAEGERIYEYFAAQLAAQGVPVETGRFGADMKVELLNDGPVTIWMDI</sequence>
<organism>
    <name type="scientific">Ruegeria pomeroyi (strain ATCC 700808 / DSM 15171 / DSS-3)</name>
    <name type="common">Silicibacter pomeroyi</name>
    <dbReference type="NCBI Taxonomy" id="246200"/>
    <lineage>
        <taxon>Bacteria</taxon>
        <taxon>Pseudomonadati</taxon>
        <taxon>Pseudomonadota</taxon>
        <taxon>Alphaproteobacteria</taxon>
        <taxon>Rhodobacterales</taxon>
        <taxon>Roseobacteraceae</taxon>
        <taxon>Ruegeria</taxon>
    </lineage>
</organism>
<reference key="1">
    <citation type="journal article" date="2004" name="Nature">
        <title>Genome sequence of Silicibacter pomeroyi reveals adaptations to the marine environment.</title>
        <authorList>
            <person name="Moran M.A."/>
            <person name="Buchan A."/>
            <person name="Gonzalez J.M."/>
            <person name="Heidelberg J.F."/>
            <person name="Whitman W.B."/>
            <person name="Kiene R.P."/>
            <person name="Henriksen J.R."/>
            <person name="King G.M."/>
            <person name="Belas R."/>
            <person name="Fuqua C."/>
            <person name="Brinkac L.M."/>
            <person name="Lewis M."/>
            <person name="Johri S."/>
            <person name="Weaver B."/>
            <person name="Pai G."/>
            <person name="Eisen J.A."/>
            <person name="Rahe E."/>
            <person name="Sheldon W.M."/>
            <person name="Ye W."/>
            <person name="Miller T.R."/>
            <person name="Carlton J."/>
            <person name="Rasko D.A."/>
            <person name="Paulsen I.T."/>
            <person name="Ren Q."/>
            <person name="Daugherty S.C."/>
            <person name="DeBoy R.T."/>
            <person name="Dodson R.J."/>
            <person name="Durkin A.S."/>
            <person name="Madupu R."/>
            <person name="Nelson W.C."/>
            <person name="Sullivan S.A."/>
            <person name="Rosovitz M.J."/>
            <person name="Haft D.H."/>
            <person name="Selengut J."/>
            <person name="Ward N."/>
        </authorList>
    </citation>
    <scope>NUCLEOTIDE SEQUENCE [LARGE SCALE GENOMIC DNA]</scope>
    <source>
        <strain>ATCC 700808 / DSM 15171 / DSS-3</strain>
    </source>
</reference>
<reference key="2">
    <citation type="journal article" date="2014" name="Stand. Genomic Sci.">
        <title>An updated genome annotation for the model marine bacterium Ruegeria pomeroyi DSS-3.</title>
        <authorList>
            <person name="Rivers A.R."/>
            <person name="Smith C.B."/>
            <person name="Moran M.A."/>
        </authorList>
    </citation>
    <scope>GENOME REANNOTATION</scope>
    <source>
        <strain>ATCC 700808 / DSM 15171 / DSS-3</strain>
    </source>
</reference>
<feature type="chain" id="PRO_0000164584" description="D-aminoacyl-tRNA deacylase">
    <location>
        <begin position="1"/>
        <end position="145"/>
    </location>
</feature>
<feature type="short sequence motif" description="Gly-cisPro motif, important for rejection of L-amino acids" evidence="1">
    <location>
        <begin position="137"/>
        <end position="138"/>
    </location>
</feature>
<name>DTD_RUEPO</name>
<evidence type="ECO:0000255" key="1">
    <source>
        <dbReference type="HAMAP-Rule" id="MF_00518"/>
    </source>
</evidence>
<accession>Q5LP58</accession>